<reference key="1">
    <citation type="journal article" date="2005" name="J. Bacteriol.">
        <title>Whole-genome sequence analysis of Pseudomonas syringae pv. phaseolicola 1448A reveals divergence among pathovars in genes involved in virulence and transposition.</title>
        <authorList>
            <person name="Joardar V."/>
            <person name="Lindeberg M."/>
            <person name="Jackson R.W."/>
            <person name="Selengut J."/>
            <person name="Dodson R."/>
            <person name="Brinkac L.M."/>
            <person name="Daugherty S.C."/>
            <person name="DeBoy R.T."/>
            <person name="Durkin A.S."/>
            <person name="Gwinn Giglio M."/>
            <person name="Madupu R."/>
            <person name="Nelson W.C."/>
            <person name="Rosovitz M.J."/>
            <person name="Sullivan S.A."/>
            <person name="Crabtree J."/>
            <person name="Creasy T."/>
            <person name="Davidsen T.M."/>
            <person name="Haft D.H."/>
            <person name="Zafar N."/>
            <person name="Zhou L."/>
            <person name="Halpin R."/>
            <person name="Holley T."/>
            <person name="Khouri H.M."/>
            <person name="Feldblyum T.V."/>
            <person name="White O."/>
            <person name="Fraser C.M."/>
            <person name="Chatterjee A.K."/>
            <person name="Cartinhour S."/>
            <person name="Schneider D."/>
            <person name="Mansfield J.W."/>
            <person name="Collmer A."/>
            <person name="Buell R."/>
        </authorList>
    </citation>
    <scope>NUCLEOTIDE SEQUENCE [LARGE SCALE GENOMIC DNA]</scope>
    <source>
        <strain>1448A / Race 6</strain>
    </source>
</reference>
<organism>
    <name type="scientific">Pseudomonas savastanoi pv. phaseolicola (strain 1448A / Race 6)</name>
    <name type="common">Pseudomonas syringae pv. phaseolicola (strain 1448A / Race 6)</name>
    <dbReference type="NCBI Taxonomy" id="264730"/>
    <lineage>
        <taxon>Bacteria</taxon>
        <taxon>Pseudomonadati</taxon>
        <taxon>Pseudomonadota</taxon>
        <taxon>Gammaproteobacteria</taxon>
        <taxon>Pseudomonadales</taxon>
        <taxon>Pseudomonadaceae</taxon>
        <taxon>Pseudomonas</taxon>
    </lineage>
</organism>
<gene>
    <name evidence="1" type="primary">atpA</name>
    <name type="ordered locus">PSPPH_5209</name>
</gene>
<evidence type="ECO:0000255" key="1">
    <source>
        <dbReference type="HAMAP-Rule" id="MF_01346"/>
    </source>
</evidence>
<proteinExistence type="inferred from homology"/>
<name>ATPA_PSE14</name>
<dbReference type="EC" id="7.1.2.2" evidence="1"/>
<dbReference type="EMBL" id="CP000058">
    <property type="protein sequence ID" value="AAZ36819.1"/>
    <property type="molecule type" value="Genomic_DNA"/>
</dbReference>
<dbReference type="RefSeq" id="WP_002555984.1">
    <property type="nucleotide sequence ID" value="NC_005773.3"/>
</dbReference>
<dbReference type="SMR" id="Q48BG3"/>
<dbReference type="GeneID" id="96221651"/>
<dbReference type="KEGG" id="psp:PSPPH_5209"/>
<dbReference type="eggNOG" id="COG0056">
    <property type="taxonomic scope" value="Bacteria"/>
</dbReference>
<dbReference type="HOGENOM" id="CLU_010091_2_1_6"/>
<dbReference type="Proteomes" id="UP000000551">
    <property type="component" value="Chromosome"/>
</dbReference>
<dbReference type="GO" id="GO:0005886">
    <property type="term" value="C:plasma membrane"/>
    <property type="evidence" value="ECO:0007669"/>
    <property type="project" value="UniProtKB-SubCell"/>
</dbReference>
<dbReference type="GO" id="GO:0045259">
    <property type="term" value="C:proton-transporting ATP synthase complex"/>
    <property type="evidence" value="ECO:0007669"/>
    <property type="project" value="UniProtKB-KW"/>
</dbReference>
<dbReference type="GO" id="GO:0043531">
    <property type="term" value="F:ADP binding"/>
    <property type="evidence" value="ECO:0007669"/>
    <property type="project" value="TreeGrafter"/>
</dbReference>
<dbReference type="GO" id="GO:0005524">
    <property type="term" value="F:ATP binding"/>
    <property type="evidence" value="ECO:0007669"/>
    <property type="project" value="UniProtKB-UniRule"/>
</dbReference>
<dbReference type="GO" id="GO:0046933">
    <property type="term" value="F:proton-transporting ATP synthase activity, rotational mechanism"/>
    <property type="evidence" value="ECO:0007669"/>
    <property type="project" value="UniProtKB-UniRule"/>
</dbReference>
<dbReference type="CDD" id="cd18113">
    <property type="entry name" value="ATP-synt_F1_alpha_C"/>
    <property type="match status" value="1"/>
</dbReference>
<dbReference type="CDD" id="cd18116">
    <property type="entry name" value="ATP-synt_F1_alpha_N"/>
    <property type="match status" value="1"/>
</dbReference>
<dbReference type="CDD" id="cd01132">
    <property type="entry name" value="F1-ATPase_alpha_CD"/>
    <property type="match status" value="1"/>
</dbReference>
<dbReference type="FunFam" id="1.20.150.20:FF:000001">
    <property type="entry name" value="ATP synthase subunit alpha"/>
    <property type="match status" value="1"/>
</dbReference>
<dbReference type="FunFam" id="2.40.30.20:FF:000001">
    <property type="entry name" value="ATP synthase subunit alpha"/>
    <property type="match status" value="1"/>
</dbReference>
<dbReference type="FunFam" id="3.40.50.300:FF:000002">
    <property type="entry name" value="ATP synthase subunit alpha"/>
    <property type="match status" value="1"/>
</dbReference>
<dbReference type="Gene3D" id="2.40.30.20">
    <property type="match status" value="1"/>
</dbReference>
<dbReference type="Gene3D" id="1.20.150.20">
    <property type="entry name" value="ATP synthase alpha/beta chain, C-terminal domain"/>
    <property type="match status" value="1"/>
</dbReference>
<dbReference type="Gene3D" id="3.40.50.300">
    <property type="entry name" value="P-loop containing nucleotide triphosphate hydrolases"/>
    <property type="match status" value="1"/>
</dbReference>
<dbReference type="HAMAP" id="MF_01346">
    <property type="entry name" value="ATP_synth_alpha_bact"/>
    <property type="match status" value="1"/>
</dbReference>
<dbReference type="InterPro" id="IPR023366">
    <property type="entry name" value="ATP_synth_asu-like_sf"/>
</dbReference>
<dbReference type="InterPro" id="IPR000793">
    <property type="entry name" value="ATP_synth_asu_C"/>
</dbReference>
<dbReference type="InterPro" id="IPR038376">
    <property type="entry name" value="ATP_synth_asu_C_sf"/>
</dbReference>
<dbReference type="InterPro" id="IPR033732">
    <property type="entry name" value="ATP_synth_F1_a_nt-bd_dom"/>
</dbReference>
<dbReference type="InterPro" id="IPR005294">
    <property type="entry name" value="ATP_synth_F1_asu"/>
</dbReference>
<dbReference type="InterPro" id="IPR020003">
    <property type="entry name" value="ATPase_a/bsu_AS"/>
</dbReference>
<dbReference type="InterPro" id="IPR004100">
    <property type="entry name" value="ATPase_F1/V1/A1_a/bsu_N"/>
</dbReference>
<dbReference type="InterPro" id="IPR036121">
    <property type="entry name" value="ATPase_F1/V1/A1_a/bsu_N_sf"/>
</dbReference>
<dbReference type="InterPro" id="IPR000194">
    <property type="entry name" value="ATPase_F1/V1/A1_a/bsu_nucl-bd"/>
</dbReference>
<dbReference type="InterPro" id="IPR027417">
    <property type="entry name" value="P-loop_NTPase"/>
</dbReference>
<dbReference type="NCBIfam" id="TIGR00962">
    <property type="entry name" value="atpA"/>
    <property type="match status" value="1"/>
</dbReference>
<dbReference type="NCBIfam" id="NF009884">
    <property type="entry name" value="PRK13343.1"/>
    <property type="match status" value="1"/>
</dbReference>
<dbReference type="PANTHER" id="PTHR48082">
    <property type="entry name" value="ATP SYNTHASE SUBUNIT ALPHA, MITOCHONDRIAL"/>
    <property type="match status" value="1"/>
</dbReference>
<dbReference type="PANTHER" id="PTHR48082:SF2">
    <property type="entry name" value="ATP SYNTHASE SUBUNIT ALPHA, MITOCHONDRIAL"/>
    <property type="match status" value="1"/>
</dbReference>
<dbReference type="Pfam" id="PF00006">
    <property type="entry name" value="ATP-synt_ab"/>
    <property type="match status" value="1"/>
</dbReference>
<dbReference type="Pfam" id="PF00306">
    <property type="entry name" value="ATP-synt_ab_C"/>
    <property type="match status" value="1"/>
</dbReference>
<dbReference type="Pfam" id="PF02874">
    <property type="entry name" value="ATP-synt_ab_N"/>
    <property type="match status" value="1"/>
</dbReference>
<dbReference type="PIRSF" id="PIRSF039088">
    <property type="entry name" value="F_ATPase_subunit_alpha"/>
    <property type="match status" value="1"/>
</dbReference>
<dbReference type="SUPFAM" id="SSF47917">
    <property type="entry name" value="C-terminal domain of alpha and beta subunits of F1 ATP synthase"/>
    <property type="match status" value="1"/>
</dbReference>
<dbReference type="SUPFAM" id="SSF50615">
    <property type="entry name" value="N-terminal domain of alpha and beta subunits of F1 ATP synthase"/>
    <property type="match status" value="1"/>
</dbReference>
<dbReference type="SUPFAM" id="SSF52540">
    <property type="entry name" value="P-loop containing nucleoside triphosphate hydrolases"/>
    <property type="match status" value="1"/>
</dbReference>
<dbReference type="PROSITE" id="PS00152">
    <property type="entry name" value="ATPASE_ALPHA_BETA"/>
    <property type="match status" value="1"/>
</dbReference>
<accession>Q48BG3</accession>
<protein>
    <recommendedName>
        <fullName evidence="1">ATP synthase subunit alpha</fullName>
        <ecNumber evidence="1">7.1.2.2</ecNumber>
    </recommendedName>
    <alternativeName>
        <fullName evidence="1">ATP synthase F1 sector subunit alpha</fullName>
    </alternativeName>
    <alternativeName>
        <fullName evidence="1">F-ATPase subunit alpha</fullName>
    </alternativeName>
</protein>
<comment type="function">
    <text evidence="1">Produces ATP from ADP in the presence of a proton gradient across the membrane. The alpha chain is a regulatory subunit.</text>
</comment>
<comment type="catalytic activity">
    <reaction evidence="1">
        <text>ATP + H2O + 4 H(+)(in) = ADP + phosphate + 5 H(+)(out)</text>
        <dbReference type="Rhea" id="RHEA:57720"/>
        <dbReference type="ChEBI" id="CHEBI:15377"/>
        <dbReference type="ChEBI" id="CHEBI:15378"/>
        <dbReference type="ChEBI" id="CHEBI:30616"/>
        <dbReference type="ChEBI" id="CHEBI:43474"/>
        <dbReference type="ChEBI" id="CHEBI:456216"/>
        <dbReference type="EC" id="7.1.2.2"/>
    </reaction>
</comment>
<comment type="subunit">
    <text evidence="1">F-type ATPases have 2 components, CF(1) - the catalytic core - and CF(0) - the membrane proton channel. CF(1) has five subunits: alpha(3), beta(3), gamma(1), delta(1), epsilon(1). CF(0) has three main subunits: a(1), b(2) and c(9-12). The alpha and beta chains form an alternating ring which encloses part of the gamma chain. CF(1) is attached to CF(0) by a central stalk formed by the gamma and epsilon chains, while a peripheral stalk is formed by the delta and b chains.</text>
</comment>
<comment type="subcellular location">
    <subcellularLocation>
        <location evidence="1">Cell inner membrane</location>
        <topology evidence="1">Peripheral membrane protein</topology>
    </subcellularLocation>
</comment>
<comment type="similarity">
    <text evidence="1">Belongs to the ATPase alpha/beta chains family.</text>
</comment>
<feature type="chain" id="PRO_0000238331" description="ATP synthase subunit alpha">
    <location>
        <begin position="1"/>
        <end position="514"/>
    </location>
</feature>
<feature type="binding site" evidence="1">
    <location>
        <begin position="170"/>
        <end position="177"/>
    </location>
    <ligand>
        <name>ATP</name>
        <dbReference type="ChEBI" id="CHEBI:30616"/>
    </ligand>
</feature>
<feature type="site" description="Required for activity" evidence="1">
    <location>
        <position position="374"/>
    </location>
</feature>
<keyword id="KW-0066">ATP synthesis</keyword>
<keyword id="KW-0067">ATP-binding</keyword>
<keyword id="KW-0997">Cell inner membrane</keyword>
<keyword id="KW-1003">Cell membrane</keyword>
<keyword id="KW-0139">CF(1)</keyword>
<keyword id="KW-0375">Hydrogen ion transport</keyword>
<keyword id="KW-0406">Ion transport</keyword>
<keyword id="KW-0472">Membrane</keyword>
<keyword id="KW-0547">Nucleotide-binding</keyword>
<keyword id="KW-1278">Translocase</keyword>
<keyword id="KW-0813">Transport</keyword>
<sequence>MQQLNPSEISEIIKGRIDKLDVTSQARNEGTVVSVSDGIVRIHGLADVMYGEMIEFPGGVYGMALNLEQDSVGAVVLGAYTTLAEGMSAKCTGRILEVPVGKELLGRVVDALGNPVDGKGPLNNTETDAVEKVAPGVIWRKSVDQPVQTGYKAVDAMIPVGRGQRELIIGDRQIGKTALAIDAIINQKNSGIFCVYVAIGQKQSTIANVVRKLEENGALANTIVVAASASESAALQFLAPYSGCTMGEFFRDRGEDALIVYDDLSKQAVAYRQISLLLRRPPGREAYPGDVFYLHSRLLERASRVSEEYVEKFTNGAVTGKTGSLTALPIIETQAGDVSAFVPTNVISITDGQIFLESAMFNSGIRPAVNAGVSVSRVGGAAQTKIIKKLSGGIRTALAQYRELAAFAQFASDLDEATRKQLEHGQRVTELMKQKQYAPMSIADMALSLYAAERGFLTDVEIAKIGSFEQALIAYFNRDHADLMAKINVKGDFNDEIDSGMKAGIEKFKATQTW</sequence>